<name>Y1877_MYCTO</name>
<accession>P9WG84</accession>
<accession>L0T853</accession>
<accession>O07753</accession>
<accession>Q7D7V2</accession>
<reference key="1">
    <citation type="journal article" date="2002" name="J. Bacteriol.">
        <title>Whole-genome comparison of Mycobacterium tuberculosis clinical and laboratory strains.</title>
        <authorList>
            <person name="Fleischmann R.D."/>
            <person name="Alland D."/>
            <person name="Eisen J.A."/>
            <person name="Carpenter L."/>
            <person name="White O."/>
            <person name="Peterson J.D."/>
            <person name="DeBoy R.T."/>
            <person name="Dodson R.J."/>
            <person name="Gwinn M.L."/>
            <person name="Haft D.H."/>
            <person name="Hickey E.K."/>
            <person name="Kolonay J.F."/>
            <person name="Nelson W.C."/>
            <person name="Umayam L.A."/>
            <person name="Ermolaeva M.D."/>
            <person name="Salzberg S.L."/>
            <person name="Delcher A."/>
            <person name="Utterback T.R."/>
            <person name="Weidman J.F."/>
            <person name="Khouri H.M."/>
            <person name="Gill J."/>
            <person name="Mikula A."/>
            <person name="Bishai W."/>
            <person name="Jacobs W.R. Jr."/>
            <person name="Venter J.C."/>
            <person name="Fraser C.M."/>
        </authorList>
    </citation>
    <scope>NUCLEOTIDE SEQUENCE [LARGE SCALE GENOMIC DNA]</scope>
    <source>
        <strain>CDC 1551 / Oshkosh</strain>
    </source>
</reference>
<dbReference type="EMBL" id="AE000516">
    <property type="protein sequence ID" value="AAK46198.1"/>
    <property type="molecule type" value="Genomic_DNA"/>
</dbReference>
<dbReference type="PIR" id="B70515">
    <property type="entry name" value="B70515"/>
</dbReference>
<dbReference type="RefSeq" id="WP_003899060.1">
    <property type="nucleotide sequence ID" value="NZ_KK341227.1"/>
</dbReference>
<dbReference type="SMR" id="P9WG84"/>
<dbReference type="KEGG" id="mtc:MT1926"/>
<dbReference type="PATRIC" id="fig|83331.31.peg.2073"/>
<dbReference type="HOGENOM" id="CLU_000960_2_4_11"/>
<dbReference type="Proteomes" id="UP000001020">
    <property type="component" value="Chromosome"/>
</dbReference>
<dbReference type="GO" id="GO:0005886">
    <property type="term" value="C:plasma membrane"/>
    <property type="evidence" value="ECO:0007669"/>
    <property type="project" value="UniProtKB-SubCell"/>
</dbReference>
<dbReference type="GO" id="GO:0022857">
    <property type="term" value="F:transmembrane transporter activity"/>
    <property type="evidence" value="ECO:0007669"/>
    <property type="project" value="InterPro"/>
</dbReference>
<dbReference type="CDD" id="cd17502">
    <property type="entry name" value="MFS_Azr1_MDR_like"/>
    <property type="match status" value="1"/>
</dbReference>
<dbReference type="FunFam" id="1.20.1720.10:FF:000004">
    <property type="entry name" value="EmrB/QacA family drug resistance transporter"/>
    <property type="match status" value="1"/>
</dbReference>
<dbReference type="Gene3D" id="1.20.1250.20">
    <property type="entry name" value="MFS general substrate transporter like domains"/>
    <property type="match status" value="1"/>
</dbReference>
<dbReference type="Gene3D" id="1.20.1720.10">
    <property type="entry name" value="Multidrug resistance protein D"/>
    <property type="match status" value="1"/>
</dbReference>
<dbReference type="InterPro" id="IPR011701">
    <property type="entry name" value="MFS"/>
</dbReference>
<dbReference type="InterPro" id="IPR020846">
    <property type="entry name" value="MFS_dom"/>
</dbReference>
<dbReference type="InterPro" id="IPR036259">
    <property type="entry name" value="MFS_trans_sf"/>
</dbReference>
<dbReference type="InterPro" id="IPR005829">
    <property type="entry name" value="Sugar_transporter_CS"/>
</dbReference>
<dbReference type="InterPro" id="IPR001958">
    <property type="entry name" value="Tet-R_TetA/multi-R_MdtG-like"/>
</dbReference>
<dbReference type="InterPro" id="IPR036390">
    <property type="entry name" value="WH_DNA-bd_sf"/>
</dbReference>
<dbReference type="PANTHER" id="PTHR23501:SF197">
    <property type="entry name" value="COMD"/>
    <property type="match status" value="1"/>
</dbReference>
<dbReference type="PANTHER" id="PTHR23501">
    <property type="entry name" value="MAJOR FACILITATOR SUPERFAMILY"/>
    <property type="match status" value="1"/>
</dbReference>
<dbReference type="Pfam" id="PF07690">
    <property type="entry name" value="MFS_1"/>
    <property type="match status" value="1"/>
</dbReference>
<dbReference type="PRINTS" id="PR01035">
    <property type="entry name" value="TCRTETA"/>
</dbReference>
<dbReference type="SUPFAM" id="SSF103473">
    <property type="entry name" value="MFS general substrate transporter"/>
    <property type="match status" value="1"/>
</dbReference>
<dbReference type="SUPFAM" id="SSF46785">
    <property type="entry name" value="Winged helix' DNA-binding domain"/>
    <property type="match status" value="1"/>
</dbReference>
<dbReference type="PROSITE" id="PS50850">
    <property type="entry name" value="MFS"/>
    <property type="match status" value="1"/>
</dbReference>
<dbReference type="PROSITE" id="PS00217">
    <property type="entry name" value="SUGAR_TRANSPORT_2"/>
    <property type="match status" value="1"/>
</dbReference>
<comment type="subcellular location">
    <subcellularLocation>
        <location evidence="2">Cell membrane</location>
        <topology evidence="2">Multi-pass membrane protein</topology>
    </subcellularLocation>
</comment>
<comment type="similarity">
    <text evidence="2">Belongs to the major facilitator superfamily. TCR/Tet family.</text>
</comment>
<protein>
    <recommendedName>
        <fullName>Uncharacterized MFS-type transporter MT1926</fullName>
    </recommendedName>
</protein>
<gene>
    <name type="ordered locus">MT1926</name>
</gene>
<proteinExistence type="inferred from homology"/>
<evidence type="ECO:0000255" key="1"/>
<evidence type="ECO:0000305" key="2"/>
<organism>
    <name type="scientific">Mycobacterium tuberculosis (strain CDC 1551 / Oshkosh)</name>
    <dbReference type="NCBI Taxonomy" id="83331"/>
    <lineage>
        <taxon>Bacteria</taxon>
        <taxon>Bacillati</taxon>
        <taxon>Actinomycetota</taxon>
        <taxon>Actinomycetes</taxon>
        <taxon>Mycobacteriales</taxon>
        <taxon>Mycobacteriaceae</taxon>
        <taxon>Mycobacterium</taxon>
        <taxon>Mycobacterium tuberculosis complex</taxon>
    </lineage>
</organism>
<feature type="chain" id="PRO_0000428406" description="Uncharacterized MFS-type transporter MT1926">
    <location>
        <begin position="1"/>
        <end position="687"/>
    </location>
</feature>
<feature type="transmembrane region" description="Helical" evidence="1">
    <location>
        <begin position="28"/>
        <end position="48"/>
    </location>
</feature>
<feature type="transmembrane region" description="Helical" evidence="1">
    <location>
        <begin position="66"/>
        <end position="86"/>
    </location>
</feature>
<feature type="transmembrane region" description="Helical" evidence="1">
    <location>
        <begin position="94"/>
        <end position="114"/>
    </location>
</feature>
<feature type="transmembrane region" description="Helical" evidence="1">
    <location>
        <begin position="126"/>
        <end position="146"/>
    </location>
</feature>
<feature type="transmembrane region" description="Helical" evidence="1">
    <location>
        <begin position="154"/>
        <end position="174"/>
    </location>
</feature>
<feature type="transmembrane region" description="Helical" evidence="1">
    <location>
        <begin position="182"/>
        <end position="202"/>
    </location>
</feature>
<feature type="transmembrane region" description="Helical" evidence="1">
    <location>
        <begin position="211"/>
        <end position="231"/>
    </location>
</feature>
<feature type="transmembrane region" description="Helical" evidence="1">
    <location>
        <begin position="243"/>
        <end position="263"/>
    </location>
</feature>
<feature type="transmembrane region" description="Helical" evidence="1">
    <location>
        <begin position="287"/>
        <end position="307"/>
    </location>
</feature>
<feature type="transmembrane region" description="Helical" evidence="1">
    <location>
        <begin position="320"/>
        <end position="340"/>
    </location>
</feature>
<feature type="transmembrane region" description="Helical" evidence="1">
    <location>
        <begin position="348"/>
        <end position="368"/>
    </location>
</feature>
<feature type="transmembrane region" description="Helical" evidence="1">
    <location>
        <begin position="378"/>
        <end position="398"/>
    </location>
</feature>
<feature type="transmembrane region" description="Helical" evidence="1">
    <location>
        <begin position="414"/>
        <end position="434"/>
    </location>
</feature>
<feature type="transmembrane region" description="Helical" evidence="1">
    <location>
        <begin position="480"/>
        <end position="500"/>
    </location>
</feature>
<sequence>MAGPTAPTTAPTAIRAGGPLLSPVRRNIIFTALVFGVLVAATGQTIVVPALPTIVAELGSTVDQSWAVTSYLLGGTVVVVVAGKLGDLLGRNRVLLGSVVVFVVGSVLCGLSQTMTMLAISRALQGVGAGAISVTAYALAAEVVPLRDRGRYQGVLGAVFGVNTVTGPLLGGWLTDYLSWRWAFWINVPVSIAVLTVAATAVPALARPPKPVIDYLGILVIAVATTALIMATSWGGTTYAWGSATIVGLLIGAAVALGFFVWLEGRAAAAILPPRLFGSPVFAVCCVLSFVVGFAMLGALTFVPIYLGYVDGASATASGLRTLPMVIGLLIASTGTGVLVGRTGRYKIFPVAGMALMAVAFLLMSQMDEWTPPLLQSLYLVVLGAGIGLSMQVLVLIVQNTSSFEDLGVATSGVTFFRVVGASFGTATFGALFVNFLDRRLGSALTSGAVPVPAVPSPAVLHQLPQSMAAPIVRAYAESLTQVFLCAVSVTVVGFILALLLREVPLTDIHDDADDLGDGFGVPRAESPEDVLEIAVRRMLPNGVRLRDIATQPGCGLGVAELWALLRIYQYQRLFEAVRLTDIGRHLHVPYQVFEPVFDRLVQTGYAARDGDILTLTPSGHRQVDSLAVLIRQWLLDHLAVAPGLKRQPDHQFEAALQHVTDAVLVQRDWYEDLGDLSESRQLAATT</sequence>
<keyword id="KW-1003">Cell membrane</keyword>
<keyword id="KW-0472">Membrane</keyword>
<keyword id="KW-1185">Reference proteome</keyword>
<keyword id="KW-0812">Transmembrane</keyword>
<keyword id="KW-1133">Transmembrane helix</keyword>
<keyword id="KW-0813">Transport</keyword>